<evidence type="ECO:0000255" key="1">
    <source>
        <dbReference type="PROSITE-ProRule" id="PRU00159"/>
    </source>
</evidence>
<evidence type="ECO:0000255" key="2">
    <source>
        <dbReference type="PROSITE-ProRule" id="PRU10027"/>
    </source>
</evidence>
<evidence type="ECO:0000256" key="3">
    <source>
        <dbReference type="SAM" id="MobiDB-lite"/>
    </source>
</evidence>
<proteinExistence type="inferred from homology"/>
<name>YL205_MIMIV</name>
<reference key="1">
    <citation type="journal article" date="2004" name="Science">
        <title>The 1.2-megabase genome sequence of Mimivirus.</title>
        <authorList>
            <person name="Raoult D."/>
            <person name="Audic S."/>
            <person name="Robert C."/>
            <person name="Abergel C."/>
            <person name="Renesto P."/>
            <person name="Ogata H."/>
            <person name="La Scola B."/>
            <person name="Susan M."/>
            <person name="Claverie J.-M."/>
        </authorList>
    </citation>
    <scope>NUCLEOTIDE SEQUENCE [LARGE SCALE GENOMIC DNA]</scope>
    <source>
        <strain>Rowbotham-Bradford</strain>
    </source>
</reference>
<feature type="chain" id="PRO_0000086846" description="Putative serine/threonine-protein kinase L205">
    <location>
        <begin position="1"/>
        <end position="542"/>
    </location>
</feature>
<feature type="domain" description="Protein kinase" evidence="1">
    <location>
        <begin position="69"/>
        <end position="538"/>
    </location>
</feature>
<feature type="region of interest" description="Disordered" evidence="3">
    <location>
        <begin position="20"/>
        <end position="49"/>
    </location>
</feature>
<feature type="region of interest" description="Disordered" evidence="3">
    <location>
        <begin position="278"/>
        <end position="314"/>
    </location>
</feature>
<feature type="compositionally biased region" description="Basic and acidic residues" evidence="3">
    <location>
        <begin position="20"/>
        <end position="30"/>
    </location>
</feature>
<feature type="compositionally biased region" description="Acidic residues" evidence="3">
    <location>
        <begin position="31"/>
        <end position="49"/>
    </location>
</feature>
<feature type="compositionally biased region" description="Acidic residues" evidence="3">
    <location>
        <begin position="295"/>
        <end position="314"/>
    </location>
</feature>
<feature type="active site" description="Proton acceptor" evidence="1 2">
    <location>
        <position position="201"/>
    </location>
</feature>
<feature type="binding site" evidence="1">
    <location>
        <begin position="75"/>
        <end position="83"/>
    </location>
    <ligand>
        <name>ATP</name>
        <dbReference type="ChEBI" id="CHEBI:30616"/>
    </ligand>
</feature>
<feature type="binding site" evidence="1">
    <location>
        <position position="98"/>
    </location>
    <ligand>
        <name>ATP</name>
        <dbReference type="ChEBI" id="CHEBI:30616"/>
    </ligand>
</feature>
<organismHost>
    <name type="scientific">Acanthamoeba polyphaga</name>
    <name type="common">Amoeba</name>
    <dbReference type="NCBI Taxonomy" id="5757"/>
</organismHost>
<gene>
    <name type="ordered locus">MIMI_L205</name>
</gene>
<keyword id="KW-0067">ATP-binding</keyword>
<keyword id="KW-0418">Kinase</keyword>
<keyword id="KW-0547">Nucleotide-binding</keyword>
<keyword id="KW-1185">Reference proteome</keyword>
<keyword id="KW-0723">Serine/threonine-protein kinase</keyword>
<keyword id="KW-0808">Transferase</keyword>
<protein>
    <recommendedName>
        <fullName>Putative serine/threonine-protein kinase L205</fullName>
        <ecNumber>2.7.11.1</ecNumber>
    </recommendedName>
</protein>
<sequence>MSISVCYYLSKMSESTKVQFEKKSVGHNSDDEYDDTVPYNEDDETSEEEVQEYNEDEVIHPGFVLKGTYLLLKKIGSGNNASVWMTYHISNDKFLAMKIQDHLCYNDGCREVTIVNKISEYGKNNPDFFCVQLLDHFYFELSDNIKYVCSIYELYAGSIHFLLEEGKYKYGLPLPVVKTIIKQLLTSLSTLHGKLNIIHSDVKPENILFKGLPDYQKNIIKLFNRSGFREKYAELCSEYPNRHENLEIEDEFMDNLEYIAMDAIKEIRILEECLNTNEELIPDDPDNNEKYYDSTDSEEYDYSDNSDYYDDDEDTGPIKKYNERLQSVDDCQEILDCKEICDLDKEYNFATVLNNRESSSDKREIIDDKYVINCQTALTDFGNSYFFDKRTRNEIQDRRYRAPEVILDLNYTFCCDIWSVACVAYELATGYVLFDPFGEHFLNRDLHHLFLIEKIVGEIPLAMKKKSKRRKFLFDKSRGYHIKNVDEFKSTNLETILMNQYLFSKEEAESFANFLMCGLSIDPATRSNADELLKHPWLNDVN</sequence>
<accession>Q5UQ24</accession>
<dbReference type="EC" id="2.7.11.1"/>
<dbReference type="EMBL" id="AY653733">
    <property type="protein sequence ID" value="AAV50478.1"/>
    <property type="molecule type" value="Genomic_DNA"/>
</dbReference>
<dbReference type="SMR" id="Q5UQ24"/>
<dbReference type="KEGG" id="vg:9924813"/>
<dbReference type="OrthoDB" id="5746at10239"/>
<dbReference type="Proteomes" id="UP000001134">
    <property type="component" value="Genome"/>
</dbReference>
<dbReference type="GO" id="GO:0005524">
    <property type="term" value="F:ATP binding"/>
    <property type="evidence" value="ECO:0007669"/>
    <property type="project" value="UniProtKB-KW"/>
</dbReference>
<dbReference type="GO" id="GO:0106310">
    <property type="term" value="F:protein serine kinase activity"/>
    <property type="evidence" value="ECO:0007669"/>
    <property type="project" value="RHEA"/>
</dbReference>
<dbReference type="GO" id="GO:0004674">
    <property type="term" value="F:protein serine/threonine kinase activity"/>
    <property type="evidence" value="ECO:0007669"/>
    <property type="project" value="UniProtKB-KW"/>
</dbReference>
<dbReference type="GO" id="GO:0050684">
    <property type="term" value="P:regulation of mRNA processing"/>
    <property type="evidence" value="ECO:0007669"/>
    <property type="project" value="TreeGrafter"/>
</dbReference>
<dbReference type="Gene3D" id="3.30.200.20">
    <property type="entry name" value="Phosphorylase Kinase, domain 1"/>
    <property type="match status" value="1"/>
</dbReference>
<dbReference type="Gene3D" id="1.10.510.10">
    <property type="entry name" value="Transferase(Phosphotransferase) domain 1"/>
    <property type="match status" value="2"/>
</dbReference>
<dbReference type="InterPro" id="IPR011009">
    <property type="entry name" value="Kinase-like_dom_sf"/>
</dbReference>
<dbReference type="InterPro" id="IPR000719">
    <property type="entry name" value="Prot_kinase_dom"/>
</dbReference>
<dbReference type="InterPro" id="IPR017441">
    <property type="entry name" value="Protein_kinase_ATP_BS"/>
</dbReference>
<dbReference type="InterPro" id="IPR008271">
    <property type="entry name" value="Ser/Thr_kinase_AS"/>
</dbReference>
<dbReference type="InterPro" id="IPR051334">
    <property type="entry name" value="SRPK"/>
</dbReference>
<dbReference type="PANTHER" id="PTHR47634">
    <property type="entry name" value="PROTEIN KINASE DOMAIN-CONTAINING PROTEIN-RELATED"/>
    <property type="match status" value="1"/>
</dbReference>
<dbReference type="PANTHER" id="PTHR47634:SF9">
    <property type="entry name" value="PROTEIN KINASE DOMAIN-CONTAINING PROTEIN-RELATED"/>
    <property type="match status" value="1"/>
</dbReference>
<dbReference type="Pfam" id="PF00069">
    <property type="entry name" value="Pkinase"/>
    <property type="match status" value="2"/>
</dbReference>
<dbReference type="SMART" id="SM00220">
    <property type="entry name" value="S_TKc"/>
    <property type="match status" value="1"/>
</dbReference>
<dbReference type="SUPFAM" id="SSF56112">
    <property type="entry name" value="Protein kinase-like (PK-like)"/>
    <property type="match status" value="1"/>
</dbReference>
<dbReference type="PROSITE" id="PS00107">
    <property type="entry name" value="PROTEIN_KINASE_ATP"/>
    <property type="match status" value="1"/>
</dbReference>
<dbReference type="PROSITE" id="PS50011">
    <property type="entry name" value="PROTEIN_KINASE_DOM"/>
    <property type="match status" value="1"/>
</dbReference>
<dbReference type="PROSITE" id="PS00108">
    <property type="entry name" value="PROTEIN_KINASE_ST"/>
    <property type="match status" value="1"/>
</dbReference>
<comment type="catalytic activity">
    <reaction>
        <text>L-seryl-[protein] + ATP = O-phospho-L-seryl-[protein] + ADP + H(+)</text>
        <dbReference type="Rhea" id="RHEA:17989"/>
        <dbReference type="Rhea" id="RHEA-COMP:9863"/>
        <dbReference type="Rhea" id="RHEA-COMP:11604"/>
        <dbReference type="ChEBI" id="CHEBI:15378"/>
        <dbReference type="ChEBI" id="CHEBI:29999"/>
        <dbReference type="ChEBI" id="CHEBI:30616"/>
        <dbReference type="ChEBI" id="CHEBI:83421"/>
        <dbReference type="ChEBI" id="CHEBI:456216"/>
        <dbReference type="EC" id="2.7.11.1"/>
    </reaction>
</comment>
<comment type="catalytic activity">
    <reaction>
        <text>L-threonyl-[protein] + ATP = O-phospho-L-threonyl-[protein] + ADP + H(+)</text>
        <dbReference type="Rhea" id="RHEA:46608"/>
        <dbReference type="Rhea" id="RHEA-COMP:11060"/>
        <dbReference type="Rhea" id="RHEA-COMP:11605"/>
        <dbReference type="ChEBI" id="CHEBI:15378"/>
        <dbReference type="ChEBI" id="CHEBI:30013"/>
        <dbReference type="ChEBI" id="CHEBI:30616"/>
        <dbReference type="ChEBI" id="CHEBI:61977"/>
        <dbReference type="ChEBI" id="CHEBI:456216"/>
        <dbReference type="EC" id="2.7.11.1"/>
    </reaction>
</comment>
<comment type="similarity">
    <text evidence="1">Belongs to the protein kinase superfamily. Ser/Thr protein kinase family.</text>
</comment>
<organism>
    <name type="scientific">Acanthamoeba polyphaga mimivirus</name>
    <name type="common">APMV</name>
    <dbReference type="NCBI Taxonomy" id="212035"/>
    <lineage>
        <taxon>Viruses</taxon>
        <taxon>Varidnaviria</taxon>
        <taxon>Bamfordvirae</taxon>
        <taxon>Nucleocytoviricota</taxon>
        <taxon>Megaviricetes</taxon>
        <taxon>Imitervirales</taxon>
        <taxon>Mimiviridae</taxon>
        <taxon>Megamimivirinae</taxon>
        <taxon>Mimivirus</taxon>
        <taxon>Mimivirus bradfordmassiliense</taxon>
    </lineage>
</organism>